<accession>Q61080</accession>
<accession>B2RSC1</accession>
<accession>Q61661</accession>
<reference key="1">
    <citation type="journal article" date="1994" name="Dev. Biol.">
        <title>Members of the HNF-3/forkhead family of transcription factors exhibit distinct cellular expression patterns in lung and regulate the surfactant protein B promoter.</title>
        <authorList>
            <person name="Clevidence D.E."/>
            <person name="Overdier D.G."/>
            <person name="Peterson R.S."/>
            <person name="Porcella A."/>
            <person name="Ye H."/>
            <person name="Paulson K.E."/>
            <person name="Costa R.H."/>
        </authorList>
    </citation>
    <scope>NUCLEOTIDE SEQUENCE [GENOMIC DNA]</scope>
    <scope>TISSUE SPECIFICITY</scope>
    <source>
        <strain>BALB/cJ</strain>
        <tissue>Lung</tissue>
    </source>
</reference>
<reference key="2">
    <citation type="journal article" date="2001" name="Gene">
        <title>Structural characterization of the mouse Foxf1a gene.</title>
        <authorList>
            <person name="Chang V.W.H."/>
            <person name="Ho Y.S."/>
        </authorList>
    </citation>
    <scope>NUCLEOTIDE SEQUENCE [GENOMIC DNA]</scope>
    <scope>TISSUE SPECIFICITY</scope>
    <source>
        <strain>129/Sv</strain>
        <tissue>Lung</tissue>
    </source>
</reference>
<reference key="3">
    <citation type="journal article" date="2004" name="Genome Res.">
        <title>The status, quality, and expansion of the NIH full-length cDNA project: the Mammalian Gene Collection (MGC).</title>
        <authorList>
            <consortium name="The MGC Project Team"/>
        </authorList>
    </citation>
    <scope>NUCLEOTIDE SEQUENCE [LARGE SCALE MRNA]</scope>
    <source>
        <tissue>Lung</tissue>
    </source>
</reference>
<reference key="4">
    <citation type="journal article" date="1996" name="J. Biol. Chem.">
        <title>Differential activation of lung-specific genes by two forkhead proteins, FREAC-1 and FREAC-2.</title>
        <authorList>
            <person name="Hellqvist M."/>
            <person name="Mahlapuu M."/>
            <person name="Samuelsson L."/>
            <person name="Enerbaeck S."/>
            <person name="Carlsson P."/>
        </authorList>
    </citation>
    <scope>NUCLEOTIDE SEQUENCE [GENOMIC DNA] OF 26-378</scope>
    <source>
        <strain>129</strain>
    </source>
</reference>
<name>FOXF1_MOUSE</name>
<protein>
    <recommendedName>
        <fullName>Forkhead box protein F1</fullName>
    </recommendedName>
    <alternativeName>
        <fullName>Forkhead-related protein FKHL5</fullName>
    </alternativeName>
    <alternativeName>
        <fullName>Forkhead-related transcription factor 1</fullName>
        <shortName>FREAC-1</shortName>
    </alternativeName>
    <alternativeName>
        <fullName>Hepatocyte nuclear factor 3 forkhead homolog 8</fullName>
        <shortName>HFH-8</shortName>
    </alternativeName>
</protein>
<keyword id="KW-0010">Activator</keyword>
<keyword id="KW-0238">DNA-binding</keyword>
<keyword id="KW-0539">Nucleus</keyword>
<keyword id="KW-1185">Reference proteome</keyword>
<keyword id="KW-0804">Transcription</keyword>
<keyword id="KW-0805">Transcription regulation</keyword>
<evidence type="ECO:0000250" key="1"/>
<evidence type="ECO:0000255" key="2">
    <source>
        <dbReference type="PROSITE-ProRule" id="PRU00089"/>
    </source>
</evidence>
<evidence type="ECO:0000256" key="3">
    <source>
        <dbReference type="SAM" id="MobiDB-lite"/>
    </source>
</evidence>
<evidence type="ECO:0000269" key="4">
    <source>
    </source>
</evidence>
<evidence type="ECO:0000269" key="5">
    <source>
    </source>
</evidence>
<evidence type="ECO:0000305" key="6"/>
<feature type="chain" id="PRO_0000091833" description="Forkhead box protein F1">
    <location>
        <begin position="1"/>
        <end position="378"/>
    </location>
</feature>
<feature type="DNA-binding region" description="Fork-head" evidence="2">
    <location>
        <begin position="47"/>
        <end position="138"/>
    </location>
</feature>
<feature type="region of interest" description="Disordered" evidence="3">
    <location>
        <begin position="1"/>
        <end position="45"/>
    </location>
</feature>
<feature type="compositionally biased region" description="Gly residues" evidence="3">
    <location>
        <begin position="11"/>
        <end position="23"/>
    </location>
</feature>
<feature type="compositionally biased region" description="Low complexity" evidence="3">
    <location>
        <begin position="24"/>
        <end position="42"/>
    </location>
</feature>
<feature type="sequence conflict" description="In Ref. 2; AAA64885." evidence="6" ref="2">
    <original>GPTKAKKTNAGVR</original>
    <variation>PHQGQEDQRRRA</variation>
    <location>
        <begin position="32"/>
        <end position="44"/>
    </location>
</feature>
<feature type="sequence conflict" description="In Ref. 2; AAA64885." evidence="6" ref="2">
    <original>AGEYPHHDSSVPASPLLPAGAGGVMEPHAVYSSSAAAWPPA</original>
    <variation>GRGVPAPRQLGARFTAARPAPAESWSRTPFTPALQQPGRP</variation>
    <location>
        <begin position="232"/>
        <end position="272"/>
    </location>
</feature>
<proteinExistence type="evidence at transcript level"/>
<gene>
    <name type="primary">Foxf1</name>
    <name type="synonym">Fkhl5</name>
    <name type="synonym">Foxf1a</name>
    <name type="synonym">Freac1</name>
    <name type="synonym">Hfh8</name>
</gene>
<comment type="function">
    <text evidence="1">Probable transcription activator for a number of lung-specific genes.</text>
</comment>
<comment type="subcellular location">
    <subcellularLocation>
        <location evidence="2">Nucleus</location>
    </subcellularLocation>
</comment>
<comment type="tissue specificity">
    <text evidence="4 5">Expressed primarily in lung in alveolar type II pneumocyte cells, and to a lesser extent in placenta, stomach, intestine and colon.</text>
</comment>
<comment type="domain">
    <text evidence="1">Activation domains C-terminal of (and distinct from) the forkhead domains are necessary for transcriptional activation.</text>
</comment>
<comment type="caution">
    <text evidence="6">It is uncertain whether Met-1 or Met-26 is the initiator.</text>
</comment>
<comment type="sequence caution" evidence="6">
    <conflict type="erroneous initiation">
        <sequence resource="EMBL-CDS" id="AAI38806"/>
    </conflict>
    <text>Truncated N-terminus.</text>
</comment>
<comment type="sequence caution" evidence="6">
    <conflict type="erroneous initiation">
        <sequence resource="EMBL-CDS" id="AAI38807"/>
    </conflict>
    <text>Truncated N-terminus.</text>
</comment>
<comment type="sequence caution" evidence="6">
    <conflict type="erroneous initiation">
        <sequence resource="EMBL-CDS" id="AAK35051"/>
    </conflict>
    <text>Truncated N-terminus.</text>
</comment>
<organism>
    <name type="scientific">Mus musculus</name>
    <name type="common">Mouse</name>
    <dbReference type="NCBI Taxonomy" id="10090"/>
    <lineage>
        <taxon>Eukaryota</taxon>
        <taxon>Metazoa</taxon>
        <taxon>Chordata</taxon>
        <taxon>Craniata</taxon>
        <taxon>Vertebrata</taxon>
        <taxon>Euteleostomi</taxon>
        <taxon>Mammalia</taxon>
        <taxon>Eutheria</taxon>
        <taxon>Euarchontoglires</taxon>
        <taxon>Glires</taxon>
        <taxon>Rodentia</taxon>
        <taxon>Myomorpha</taxon>
        <taxon>Muroidea</taxon>
        <taxon>Muridae</taxon>
        <taxon>Murinae</taxon>
        <taxon>Mus</taxon>
        <taxon>Mus</taxon>
    </lineage>
</organism>
<sequence length="378" mass="39958">MSAPDKQQPPHGGGTGGGGGAGGQAMDPAAAGPTKAKKTNAGVRRPEKPPYSYIALIVMAIQSSPSKRLTLSEIYQFLQARFPFFRGAYQGWKNSVRHNLSLNECFIKLPKGLGRPGKGHYWTIDPASEFMFEEGSFRRRPRGFRRKCQALKPVYSMVNGLGFNHLPDTYGFQGSGGLSCAPNSLALEGGLGMMNGHLAGNVDGMALPSHSVPHLPSNGGHSYMGGCGGSAAGEYPHHDSSVPASPLLPAGAGGVMEPHAVYSSSAAAWPPAASAALNSGASYIKQQPLSPCNPAANPLSGSISTHSLEQPYLHQNSHNGPAELQGIPRYHSQSPSMCDRKEFVFSFNAMASSSMHTTGGGSYYHQQVTYQDIKPCVM</sequence>
<dbReference type="EMBL" id="L35949">
    <property type="protein sequence ID" value="AAA64885.1"/>
    <property type="molecule type" value="Genomic_DNA"/>
</dbReference>
<dbReference type="EMBL" id="AF346834">
    <property type="protein sequence ID" value="AAK35051.1"/>
    <property type="status" value="ALT_INIT"/>
    <property type="molecule type" value="Genomic_DNA"/>
</dbReference>
<dbReference type="EMBL" id="BC138805">
    <property type="protein sequence ID" value="AAI38806.1"/>
    <property type="status" value="ALT_INIT"/>
    <property type="molecule type" value="mRNA"/>
</dbReference>
<dbReference type="EMBL" id="BC138806">
    <property type="protein sequence ID" value="AAI38807.1"/>
    <property type="status" value="ALT_INIT"/>
    <property type="molecule type" value="mRNA"/>
</dbReference>
<dbReference type="EMBL" id="U42556">
    <property type="protein sequence ID" value="AAC52445.1"/>
    <property type="molecule type" value="Genomic_DNA"/>
</dbReference>
<dbReference type="CCDS" id="CCDS22722.2"/>
<dbReference type="PIR" id="I49735">
    <property type="entry name" value="I49735"/>
</dbReference>
<dbReference type="RefSeq" id="NP_034556.2">
    <property type="nucleotide sequence ID" value="NM_010426.3"/>
</dbReference>
<dbReference type="SMR" id="Q61080"/>
<dbReference type="BioGRID" id="200290">
    <property type="interactions" value="17"/>
</dbReference>
<dbReference type="FunCoup" id="Q61080">
    <property type="interactions" value="1609"/>
</dbReference>
<dbReference type="STRING" id="10090.ENSMUSP00000137662"/>
<dbReference type="GlyGen" id="Q61080">
    <property type="glycosylation" value="1 site"/>
</dbReference>
<dbReference type="iPTMnet" id="Q61080"/>
<dbReference type="PhosphoSitePlus" id="Q61080"/>
<dbReference type="PaxDb" id="10090-ENSMUSP00000137662"/>
<dbReference type="ProteomicsDB" id="271793"/>
<dbReference type="Antibodypedia" id="17194">
    <property type="antibodies" value="247 antibodies from 30 providers"/>
</dbReference>
<dbReference type="DNASU" id="15227"/>
<dbReference type="Ensembl" id="ENSMUST00000181504.2">
    <property type="protein sequence ID" value="ENSMUSP00000137662.2"/>
    <property type="gene ID" value="ENSMUSG00000042812.6"/>
</dbReference>
<dbReference type="GeneID" id="15227"/>
<dbReference type="KEGG" id="mmu:15227"/>
<dbReference type="UCSC" id="uc009nrn.2">
    <property type="organism name" value="mouse"/>
</dbReference>
<dbReference type="AGR" id="MGI:1347470"/>
<dbReference type="CTD" id="2294"/>
<dbReference type="MGI" id="MGI:1347470">
    <property type="gene designation" value="Foxf1"/>
</dbReference>
<dbReference type="VEuPathDB" id="HostDB:ENSMUSG00000042812"/>
<dbReference type="eggNOG" id="KOG2294">
    <property type="taxonomic scope" value="Eukaryota"/>
</dbReference>
<dbReference type="GeneTree" id="ENSGT00940000161035"/>
<dbReference type="HOGENOM" id="CLU_039845_1_0_1"/>
<dbReference type="InParanoid" id="Q61080"/>
<dbReference type="OMA" id="KPHGQTA"/>
<dbReference type="OrthoDB" id="5954824at2759"/>
<dbReference type="PhylomeDB" id="Q61080"/>
<dbReference type="TreeFam" id="TF351598"/>
<dbReference type="BioGRID-ORCS" id="15227">
    <property type="hits" value="3 hits in 77 CRISPR screens"/>
</dbReference>
<dbReference type="ChiTaRS" id="Foxf1">
    <property type="organism name" value="mouse"/>
</dbReference>
<dbReference type="PRO" id="PR:Q61080"/>
<dbReference type="Proteomes" id="UP000000589">
    <property type="component" value="Chromosome 8"/>
</dbReference>
<dbReference type="RNAct" id="Q61080">
    <property type="molecule type" value="protein"/>
</dbReference>
<dbReference type="Bgee" id="ENSMUSG00000042812">
    <property type="expression patterns" value="Expressed in right lung lobe and 144 other cell types or tissues"/>
</dbReference>
<dbReference type="GO" id="GO:0005654">
    <property type="term" value="C:nucleoplasm"/>
    <property type="evidence" value="ECO:0000304"/>
    <property type="project" value="Reactome"/>
</dbReference>
<dbReference type="GO" id="GO:0005634">
    <property type="term" value="C:nucleus"/>
    <property type="evidence" value="ECO:0000314"/>
    <property type="project" value="MGI"/>
</dbReference>
<dbReference type="GO" id="GO:0001228">
    <property type="term" value="F:DNA-binding transcription activator activity, RNA polymerase II-specific"/>
    <property type="evidence" value="ECO:0007669"/>
    <property type="project" value="Ensembl"/>
</dbReference>
<dbReference type="GO" id="GO:0000978">
    <property type="term" value="F:RNA polymerase II cis-regulatory region sequence-specific DNA binding"/>
    <property type="evidence" value="ECO:0000314"/>
    <property type="project" value="MGI"/>
</dbReference>
<dbReference type="GO" id="GO:0000976">
    <property type="term" value="F:transcription cis-regulatory region binding"/>
    <property type="evidence" value="ECO:0000314"/>
    <property type="project" value="MGI"/>
</dbReference>
<dbReference type="GO" id="GO:0009887">
    <property type="term" value="P:animal organ morphogenesis"/>
    <property type="evidence" value="ECO:0000315"/>
    <property type="project" value="MGI"/>
</dbReference>
<dbReference type="GO" id="GO:0003214">
    <property type="term" value="P:cardiac left ventricle morphogenesis"/>
    <property type="evidence" value="ECO:0007669"/>
    <property type="project" value="Ensembl"/>
</dbReference>
<dbReference type="GO" id="GO:0098609">
    <property type="term" value="P:cell-cell adhesion"/>
    <property type="evidence" value="ECO:0000315"/>
    <property type="project" value="MGI"/>
</dbReference>
<dbReference type="GO" id="GO:0071345">
    <property type="term" value="P:cellular response to cytokine stimulus"/>
    <property type="evidence" value="ECO:0000314"/>
    <property type="project" value="MGI"/>
</dbReference>
<dbReference type="GO" id="GO:0014822">
    <property type="term" value="P:detection of wounding"/>
    <property type="evidence" value="ECO:0000315"/>
    <property type="project" value="MGI"/>
</dbReference>
<dbReference type="GO" id="GO:0007368">
    <property type="term" value="P:determination of left/right symmetry"/>
    <property type="evidence" value="ECO:0000315"/>
    <property type="project" value="MGI"/>
</dbReference>
<dbReference type="GO" id="GO:0097070">
    <property type="term" value="P:ductus arteriosus closure"/>
    <property type="evidence" value="ECO:0007669"/>
    <property type="project" value="Ensembl"/>
</dbReference>
<dbReference type="GO" id="GO:0048566">
    <property type="term" value="P:embryonic digestive tract development"/>
    <property type="evidence" value="ECO:0000316"/>
    <property type="project" value="MGI"/>
</dbReference>
<dbReference type="GO" id="GO:0048613">
    <property type="term" value="P:embryonic ectodermal digestive tract morphogenesis"/>
    <property type="evidence" value="ECO:0007669"/>
    <property type="project" value="Ensembl"/>
</dbReference>
<dbReference type="GO" id="GO:0048617">
    <property type="term" value="P:embryonic foregut morphogenesis"/>
    <property type="evidence" value="ECO:0000315"/>
    <property type="project" value="MGI"/>
</dbReference>
<dbReference type="GO" id="GO:0003197">
    <property type="term" value="P:endocardial cushion development"/>
    <property type="evidence" value="ECO:0007669"/>
    <property type="project" value="Ensembl"/>
</dbReference>
<dbReference type="GO" id="GO:0061030">
    <property type="term" value="P:epithelial cell differentiation involved in mammary gland alveolus development"/>
    <property type="evidence" value="ECO:0000316"/>
    <property type="project" value="MGI"/>
</dbReference>
<dbReference type="GO" id="GO:0060441">
    <property type="term" value="P:epithelial tube branching involved in lung morphogenesis"/>
    <property type="evidence" value="ECO:0000315"/>
    <property type="project" value="MGI"/>
</dbReference>
<dbReference type="GO" id="GO:0045198">
    <property type="term" value="P:establishment of epithelial cell apical/basal polarity"/>
    <property type="evidence" value="ECO:0000316"/>
    <property type="project" value="MGI"/>
</dbReference>
<dbReference type="GO" id="GO:0030198">
    <property type="term" value="P:extracellular matrix organization"/>
    <property type="evidence" value="ECO:0000316"/>
    <property type="project" value="MGI"/>
</dbReference>
<dbReference type="GO" id="GO:0001701">
    <property type="term" value="P:in utero embryonic development"/>
    <property type="evidence" value="ECO:0000315"/>
    <property type="project" value="MGI"/>
</dbReference>
<dbReference type="GO" id="GO:0048371">
    <property type="term" value="P:lateral mesodermal cell differentiation"/>
    <property type="evidence" value="ECO:0000315"/>
    <property type="project" value="MGI"/>
</dbReference>
<dbReference type="GO" id="GO:0048286">
    <property type="term" value="P:lung alveolus development"/>
    <property type="evidence" value="ECO:0000315"/>
    <property type="project" value="MGI"/>
</dbReference>
<dbReference type="GO" id="GO:0030324">
    <property type="term" value="P:lung development"/>
    <property type="evidence" value="ECO:0000315"/>
    <property type="project" value="MGI"/>
</dbReference>
<dbReference type="GO" id="GO:0060463">
    <property type="term" value="P:lung lobe morphogenesis"/>
    <property type="evidence" value="ECO:0000315"/>
    <property type="project" value="MGI"/>
</dbReference>
<dbReference type="GO" id="GO:0060425">
    <property type="term" value="P:lung morphogenesis"/>
    <property type="evidence" value="ECO:0000315"/>
    <property type="project" value="MGI"/>
</dbReference>
<dbReference type="GO" id="GO:0060426">
    <property type="term" value="P:lung vasculature development"/>
    <property type="evidence" value="ECO:0007669"/>
    <property type="project" value="Ensembl"/>
</dbReference>
<dbReference type="GO" id="GO:0090131">
    <property type="term" value="P:mesenchyme migration"/>
    <property type="evidence" value="ECO:0000315"/>
    <property type="project" value="MGI"/>
</dbReference>
<dbReference type="GO" id="GO:0007498">
    <property type="term" value="P:mesoderm development"/>
    <property type="evidence" value="ECO:0000315"/>
    <property type="project" value="MGI"/>
</dbReference>
<dbReference type="GO" id="GO:0048333">
    <property type="term" value="P:mesodermal cell differentiation"/>
    <property type="evidence" value="ECO:0000315"/>
    <property type="project" value="MGI"/>
</dbReference>
<dbReference type="GO" id="GO:0007494">
    <property type="term" value="P:midgut development"/>
    <property type="evidence" value="ECO:0007669"/>
    <property type="project" value="Ensembl"/>
</dbReference>
<dbReference type="GO" id="GO:0050728">
    <property type="term" value="P:negative regulation of inflammatory response"/>
    <property type="evidence" value="ECO:0000315"/>
    <property type="project" value="MGI"/>
</dbReference>
<dbReference type="GO" id="GO:0043305">
    <property type="term" value="P:negative regulation of mast cell degranulation"/>
    <property type="evidence" value="ECO:0000315"/>
    <property type="project" value="MGI"/>
</dbReference>
<dbReference type="GO" id="GO:0000122">
    <property type="term" value="P:negative regulation of transcription by RNA polymerase II"/>
    <property type="evidence" value="ECO:0000315"/>
    <property type="project" value="MGI"/>
</dbReference>
<dbReference type="GO" id="GO:0031016">
    <property type="term" value="P:pancreas development"/>
    <property type="evidence" value="ECO:0007669"/>
    <property type="project" value="Ensembl"/>
</dbReference>
<dbReference type="GO" id="GO:0030335">
    <property type="term" value="P:positive regulation of cell migration"/>
    <property type="evidence" value="ECO:0000315"/>
    <property type="project" value="MGI"/>
</dbReference>
<dbReference type="GO" id="GO:0010811">
    <property type="term" value="P:positive regulation of cell-substrate adhesion"/>
    <property type="evidence" value="ECO:0000315"/>
    <property type="project" value="MGI"/>
</dbReference>
<dbReference type="GO" id="GO:0002053">
    <property type="term" value="P:positive regulation of mesenchymal cell proliferation"/>
    <property type="evidence" value="ECO:0000315"/>
    <property type="project" value="MGI"/>
</dbReference>
<dbReference type="GO" id="GO:0045944">
    <property type="term" value="P:positive regulation of transcription by RNA polymerase II"/>
    <property type="evidence" value="ECO:0000314"/>
    <property type="project" value="MGI"/>
</dbReference>
<dbReference type="GO" id="GO:0060461">
    <property type="term" value="P:right lung morphogenesis"/>
    <property type="evidence" value="ECO:0000315"/>
    <property type="project" value="MGI"/>
</dbReference>
<dbReference type="GO" id="GO:0051145">
    <property type="term" value="P:smooth muscle cell differentiation"/>
    <property type="evidence" value="ECO:0000315"/>
    <property type="project" value="MGI"/>
</dbReference>
<dbReference type="GO" id="GO:0007224">
    <property type="term" value="P:smoothened signaling pathway"/>
    <property type="evidence" value="ECO:0000314"/>
    <property type="project" value="MGI"/>
</dbReference>
<dbReference type="GO" id="GO:0001756">
    <property type="term" value="P:somitogenesis"/>
    <property type="evidence" value="ECO:0000315"/>
    <property type="project" value="MGI"/>
</dbReference>
<dbReference type="GO" id="GO:0060438">
    <property type="term" value="P:trachea development"/>
    <property type="evidence" value="ECO:0000315"/>
    <property type="project" value="MGI"/>
</dbReference>
<dbReference type="GO" id="GO:0072189">
    <property type="term" value="P:ureter development"/>
    <property type="evidence" value="ECO:0007669"/>
    <property type="project" value="Ensembl"/>
</dbReference>
<dbReference type="GO" id="GO:0001570">
    <property type="term" value="P:vasculogenesis"/>
    <property type="evidence" value="ECO:0000315"/>
    <property type="project" value="MGI"/>
</dbReference>
<dbReference type="GO" id="GO:0060841">
    <property type="term" value="P:venous blood vessel development"/>
    <property type="evidence" value="ECO:0007669"/>
    <property type="project" value="Ensembl"/>
</dbReference>
<dbReference type="CDD" id="cd20049">
    <property type="entry name" value="FH_FOXF1"/>
    <property type="match status" value="1"/>
</dbReference>
<dbReference type="FunFam" id="1.10.10.10:FF:000071">
    <property type="entry name" value="Forkhead box F1"/>
    <property type="match status" value="1"/>
</dbReference>
<dbReference type="Gene3D" id="1.10.10.10">
    <property type="entry name" value="Winged helix-like DNA-binding domain superfamily/Winged helix DNA-binding domain"/>
    <property type="match status" value="1"/>
</dbReference>
<dbReference type="InterPro" id="IPR001766">
    <property type="entry name" value="Fork_head_dom"/>
</dbReference>
<dbReference type="InterPro" id="IPR051770">
    <property type="entry name" value="Forkhead_box_regulator"/>
</dbReference>
<dbReference type="InterPro" id="IPR018122">
    <property type="entry name" value="TF_fork_head_CS_1"/>
</dbReference>
<dbReference type="InterPro" id="IPR030456">
    <property type="entry name" value="TF_fork_head_CS_2"/>
</dbReference>
<dbReference type="InterPro" id="IPR036388">
    <property type="entry name" value="WH-like_DNA-bd_sf"/>
</dbReference>
<dbReference type="InterPro" id="IPR036390">
    <property type="entry name" value="WH_DNA-bd_sf"/>
</dbReference>
<dbReference type="PANTHER" id="PTHR46262">
    <property type="entry name" value="FORKHEAD BOX PROTEIN BINIOU"/>
    <property type="match status" value="1"/>
</dbReference>
<dbReference type="PANTHER" id="PTHR46262:SF1">
    <property type="entry name" value="FORKHEAD BOX PROTEIN F1"/>
    <property type="match status" value="1"/>
</dbReference>
<dbReference type="Pfam" id="PF00250">
    <property type="entry name" value="Forkhead"/>
    <property type="match status" value="1"/>
</dbReference>
<dbReference type="PRINTS" id="PR00053">
    <property type="entry name" value="FORKHEAD"/>
</dbReference>
<dbReference type="SMART" id="SM00339">
    <property type="entry name" value="FH"/>
    <property type="match status" value="1"/>
</dbReference>
<dbReference type="SUPFAM" id="SSF46785">
    <property type="entry name" value="Winged helix' DNA-binding domain"/>
    <property type="match status" value="1"/>
</dbReference>
<dbReference type="PROSITE" id="PS00657">
    <property type="entry name" value="FORK_HEAD_1"/>
    <property type="match status" value="1"/>
</dbReference>
<dbReference type="PROSITE" id="PS00658">
    <property type="entry name" value="FORK_HEAD_2"/>
    <property type="match status" value="1"/>
</dbReference>
<dbReference type="PROSITE" id="PS50039">
    <property type="entry name" value="FORK_HEAD_3"/>
    <property type="match status" value="1"/>
</dbReference>